<feature type="chain" id="PRO_0000385891" description="GTPase Obg">
    <location>
        <begin position="1"/>
        <end position="366"/>
    </location>
</feature>
<feature type="domain" description="Obg" evidence="2">
    <location>
        <begin position="1"/>
        <end position="162"/>
    </location>
</feature>
<feature type="domain" description="OBG-type G" evidence="1">
    <location>
        <begin position="163"/>
        <end position="335"/>
    </location>
</feature>
<feature type="binding site" evidence="1">
    <location>
        <begin position="169"/>
        <end position="176"/>
    </location>
    <ligand>
        <name>GTP</name>
        <dbReference type="ChEBI" id="CHEBI:37565"/>
    </ligand>
</feature>
<feature type="binding site" evidence="1">
    <location>
        <position position="176"/>
    </location>
    <ligand>
        <name>Mg(2+)</name>
        <dbReference type="ChEBI" id="CHEBI:18420"/>
    </ligand>
</feature>
<feature type="binding site" evidence="1">
    <location>
        <begin position="194"/>
        <end position="198"/>
    </location>
    <ligand>
        <name>GTP</name>
        <dbReference type="ChEBI" id="CHEBI:37565"/>
    </ligand>
</feature>
<feature type="binding site" evidence="1">
    <location>
        <position position="196"/>
    </location>
    <ligand>
        <name>Mg(2+)</name>
        <dbReference type="ChEBI" id="CHEBI:18420"/>
    </ligand>
</feature>
<feature type="binding site" evidence="1">
    <location>
        <begin position="218"/>
        <end position="221"/>
    </location>
    <ligand>
        <name>GTP</name>
        <dbReference type="ChEBI" id="CHEBI:37565"/>
    </ligand>
</feature>
<feature type="binding site" evidence="1">
    <location>
        <begin position="288"/>
        <end position="291"/>
    </location>
    <ligand>
        <name>GTP</name>
        <dbReference type="ChEBI" id="CHEBI:37565"/>
    </ligand>
</feature>
<feature type="binding site" evidence="1">
    <location>
        <begin position="316"/>
        <end position="318"/>
    </location>
    <ligand>
        <name>GTP</name>
        <dbReference type="ChEBI" id="CHEBI:37565"/>
    </ligand>
</feature>
<keyword id="KW-0963">Cytoplasm</keyword>
<keyword id="KW-0342">GTP-binding</keyword>
<keyword id="KW-0378">Hydrolase</keyword>
<keyword id="KW-0460">Magnesium</keyword>
<keyword id="KW-0479">Metal-binding</keyword>
<keyword id="KW-0547">Nucleotide-binding</keyword>
<keyword id="KW-1185">Reference proteome</keyword>
<proteinExistence type="inferred from homology"/>
<accession>Q72DK0</accession>
<comment type="function">
    <text evidence="1">An essential GTPase which binds GTP, GDP and possibly (p)ppGpp with moderate affinity, with high nucleotide exchange rates and a fairly low GTP hydrolysis rate. Plays a role in control of the cell cycle, stress response, ribosome biogenesis and in those bacteria that undergo differentiation, in morphogenesis control.</text>
</comment>
<comment type="cofactor">
    <cofactor evidence="1">
        <name>Mg(2+)</name>
        <dbReference type="ChEBI" id="CHEBI:18420"/>
    </cofactor>
</comment>
<comment type="subunit">
    <text evidence="1">Monomer.</text>
</comment>
<comment type="subcellular location">
    <subcellularLocation>
        <location evidence="1">Cytoplasm</location>
    </subcellularLocation>
</comment>
<comment type="similarity">
    <text evidence="1">Belongs to the TRAFAC class OBG-HflX-like GTPase superfamily. OBG GTPase family.</text>
</comment>
<gene>
    <name evidence="1" type="primary">obg</name>
    <name type="ordered locus">DVU_0929</name>
</gene>
<sequence>MRFVDEATINVRAGKGGNGCLSFRREKFIPRGGPDGGNGGDGGSVILRPTNRLLSLYDFRLQRNYEARNGQSGMGSQCDGRKGEDLVLELPLGTLVFEVDDEGHEQMIADLSDPDGVFVVARGGRGGKGNEHFKSSTMRAPRFAQKGEPGEERRLRLELKILADAGLLGLPNAGKSTFISRISAARPKIAAYPFTTLTPNLGVMIDEVDPDRRMVIADIPGLIEGAHTGQGLGHRFLKHVERTRFLVHILSIEDIDPENPWTGFDLINEELARFDEVLREREQIEVVNKIDLRTPEEVDALRQQAAQQGRRIFFISAMHGEGIEEVVDAMWRLRDTIDMHEPLVHLQEVEEEDEEFEDIEVVYTRE</sequence>
<name>OBG_NITV2</name>
<reference key="1">
    <citation type="journal article" date="2004" name="Nat. Biotechnol.">
        <title>The genome sequence of the anaerobic, sulfate-reducing bacterium Desulfovibrio vulgaris Hildenborough.</title>
        <authorList>
            <person name="Heidelberg J.F."/>
            <person name="Seshadri R."/>
            <person name="Haveman S.A."/>
            <person name="Hemme C.L."/>
            <person name="Paulsen I.T."/>
            <person name="Kolonay J.F."/>
            <person name="Eisen J.A."/>
            <person name="Ward N.L."/>
            <person name="Methe B.A."/>
            <person name="Brinkac L.M."/>
            <person name="Daugherty S.C."/>
            <person name="DeBoy R.T."/>
            <person name="Dodson R.J."/>
            <person name="Durkin A.S."/>
            <person name="Madupu R."/>
            <person name="Nelson W.C."/>
            <person name="Sullivan S.A."/>
            <person name="Fouts D.E."/>
            <person name="Haft D.H."/>
            <person name="Selengut J."/>
            <person name="Peterson J.D."/>
            <person name="Davidsen T.M."/>
            <person name="Zafar N."/>
            <person name="Zhou L."/>
            <person name="Radune D."/>
            <person name="Dimitrov G."/>
            <person name="Hance M."/>
            <person name="Tran K."/>
            <person name="Khouri H.M."/>
            <person name="Gill J."/>
            <person name="Utterback T.R."/>
            <person name="Feldblyum T.V."/>
            <person name="Wall J.D."/>
            <person name="Voordouw G."/>
            <person name="Fraser C.M."/>
        </authorList>
    </citation>
    <scope>NUCLEOTIDE SEQUENCE [LARGE SCALE GENOMIC DNA]</scope>
    <source>
        <strain>ATCC 29579 / DSM 644 / CCUG 34227 / NCIMB 8303 / VKM B-1760 / Hildenborough</strain>
    </source>
</reference>
<dbReference type="EC" id="3.6.5.-" evidence="1"/>
<dbReference type="EMBL" id="AE017285">
    <property type="protein sequence ID" value="AAS95409.1"/>
    <property type="molecule type" value="Genomic_DNA"/>
</dbReference>
<dbReference type="RefSeq" id="WP_010938228.1">
    <property type="nucleotide sequence ID" value="NC_002937.3"/>
</dbReference>
<dbReference type="RefSeq" id="YP_010150.1">
    <property type="nucleotide sequence ID" value="NC_002937.3"/>
</dbReference>
<dbReference type="SMR" id="Q72DK0"/>
<dbReference type="STRING" id="882.DVU_0929"/>
<dbReference type="PaxDb" id="882-DVU_0929"/>
<dbReference type="EnsemblBacteria" id="AAS95409">
    <property type="protein sequence ID" value="AAS95409"/>
    <property type="gene ID" value="DVU_0929"/>
</dbReference>
<dbReference type="KEGG" id="dvu:DVU_0929"/>
<dbReference type="PATRIC" id="fig|882.5.peg.873"/>
<dbReference type="eggNOG" id="COG0536">
    <property type="taxonomic scope" value="Bacteria"/>
</dbReference>
<dbReference type="HOGENOM" id="CLU_011747_2_0_7"/>
<dbReference type="OrthoDB" id="9807318at2"/>
<dbReference type="PhylomeDB" id="Q72DK0"/>
<dbReference type="Proteomes" id="UP000002194">
    <property type="component" value="Chromosome"/>
</dbReference>
<dbReference type="GO" id="GO:0005737">
    <property type="term" value="C:cytoplasm"/>
    <property type="evidence" value="ECO:0007669"/>
    <property type="project" value="UniProtKB-SubCell"/>
</dbReference>
<dbReference type="GO" id="GO:0005525">
    <property type="term" value="F:GTP binding"/>
    <property type="evidence" value="ECO:0007669"/>
    <property type="project" value="UniProtKB-UniRule"/>
</dbReference>
<dbReference type="GO" id="GO:0003924">
    <property type="term" value="F:GTPase activity"/>
    <property type="evidence" value="ECO:0007669"/>
    <property type="project" value="UniProtKB-UniRule"/>
</dbReference>
<dbReference type="GO" id="GO:0000287">
    <property type="term" value="F:magnesium ion binding"/>
    <property type="evidence" value="ECO:0007669"/>
    <property type="project" value="InterPro"/>
</dbReference>
<dbReference type="GO" id="GO:0042254">
    <property type="term" value="P:ribosome biogenesis"/>
    <property type="evidence" value="ECO:0007669"/>
    <property type="project" value="UniProtKB-UniRule"/>
</dbReference>
<dbReference type="CDD" id="cd01898">
    <property type="entry name" value="Obg"/>
    <property type="match status" value="1"/>
</dbReference>
<dbReference type="FunFam" id="2.70.210.12:FF:000001">
    <property type="entry name" value="GTPase Obg"/>
    <property type="match status" value="1"/>
</dbReference>
<dbReference type="Gene3D" id="2.70.210.12">
    <property type="entry name" value="GTP1/OBG domain"/>
    <property type="match status" value="1"/>
</dbReference>
<dbReference type="Gene3D" id="3.40.50.300">
    <property type="entry name" value="P-loop containing nucleotide triphosphate hydrolases"/>
    <property type="match status" value="1"/>
</dbReference>
<dbReference type="HAMAP" id="MF_01454">
    <property type="entry name" value="GTPase_Obg"/>
    <property type="match status" value="1"/>
</dbReference>
<dbReference type="InterPro" id="IPR031167">
    <property type="entry name" value="G_OBG"/>
</dbReference>
<dbReference type="InterPro" id="IPR006073">
    <property type="entry name" value="GTP-bd"/>
</dbReference>
<dbReference type="InterPro" id="IPR014100">
    <property type="entry name" value="GTP-bd_Obg/CgtA"/>
</dbReference>
<dbReference type="InterPro" id="IPR006074">
    <property type="entry name" value="GTP1-OBG_CS"/>
</dbReference>
<dbReference type="InterPro" id="IPR006169">
    <property type="entry name" value="GTP1_OBG_dom"/>
</dbReference>
<dbReference type="InterPro" id="IPR036726">
    <property type="entry name" value="GTP1_OBG_dom_sf"/>
</dbReference>
<dbReference type="InterPro" id="IPR045086">
    <property type="entry name" value="OBG_GTPase"/>
</dbReference>
<dbReference type="InterPro" id="IPR027417">
    <property type="entry name" value="P-loop_NTPase"/>
</dbReference>
<dbReference type="NCBIfam" id="TIGR02729">
    <property type="entry name" value="Obg_CgtA"/>
    <property type="match status" value="1"/>
</dbReference>
<dbReference type="NCBIfam" id="NF008955">
    <property type="entry name" value="PRK12297.1"/>
    <property type="match status" value="1"/>
</dbReference>
<dbReference type="NCBIfam" id="NF008956">
    <property type="entry name" value="PRK12299.1"/>
    <property type="match status" value="1"/>
</dbReference>
<dbReference type="PANTHER" id="PTHR11702">
    <property type="entry name" value="DEVELOPMENTALLY REGULATED GTP-BINDING PROTEIN-RELATED"/>
    <property type="match status" value="1"/>
</dbReference>
<dbReference type="PANTHER" id="PTHR11702:SF31">
    <property type="entry name" value="MITOCHONDRIAL RIBOSOME-ASSOCIATED GTPASE 2"/>
    <property type="match status" value="1"/>
</dbReference>
<dbReference type="Pfam" id="PF01018">
    <property type="entry name" value="GTP1_OBG"/>
    <property type="match status" value="1"/>
</dbReference>
<dbReference type="Pfam" id="PF01926">
    <property type="entry name" value="MMR_HSR1"/>
    <property type="match status" value="1"/>
</dbReference>
<dbReference type="PIRSF" id="PIRSF002401">
    <property type="entry name" value="GTP_bd_Obg/CgtA"/>
    <property type="match status" value="1"/>
</dbReference>
<dbReference type="PRINTS" id="PR00326">
    <property type="entry name" value="GTP1OBG"/>
</dbReference>
<dbReference type="SUPFAM" id="SSF82051">
    <property type="entry name" value="Obg GTP-binding protein N-terminal domain"/>
    <property type="match status" value="1"/>
</dbReference>
<dbReference type="SUPFAM" id="SSF52540">
    <property type="entry name" value="P-loop containing nucleoside triphosphate hydrolases"/>
    <property type="match status" value="1"/>
</dbReference>
<dbReference type="PROSITE" id="PS51710">
    <property type="entry name" value="G_OBG"/>
    <property type="match status" value="1"/>
</dbReference>
<dbReference type="PROSITE" id="PS00905">
    <property type="entry name" value="GTP1_OBG"/>
    <property type="match status" value="1"/>
</dbReference>
<dbReference type="PROSITE" id="PS51883">
    <property type="entry name" value="OBG"/>
    <property type="match status" value="1"/>
</dbReference>
<organism>
    <name type="scientific">Nitratidesulfovibrio vulgaris (strain ATCC 29579 / DSM 644 / CCUG 34227 / NCIMB 8303 / VKM B-1760 / Hildenborough)</name>
    <name type="common">Desulfovibrio vulgaris</name>
    <dbReference type="NCBI Taxonomy" id="882"/>
    <lineage>
        <taxon>Bacteria</taxon>
        <taxon>Pseudomonadati</taxon>
        <taxon>Thermodesulfobacteriota</taxon>
        <taxon>Desulfovibrionia</taxon>
        <taxon>Desulfovibrionales</taxon>
        <taxon>Desulfovibrionaceae</taxon>
        <taxon>Nitratidesulfovibrio</taxon>
    </lineage>
</organism>
<evidence type="ECO:0000255" key="1">
    <source>
        <dbReference type="HAMAP-Rule" id="MF_01454"/>
    </source>
</evidence>
<evidence type="ECO:0000255" key="2">
    <source>
        <dbReference type="PROSITE-ProRule" id="PRU01231"/>
    </source>
</evidence>
<protein>
    <recommendedName>
        <fullName evidence="1">GTPase Obg</fullName>
        <ecNumber evidence="1">3.6.5.-</ecNumber>
    </recommendedName>
    <alternativeName>
        <fullName evidence="1">GTP-binding protein Obg</fullName>
    </alternativeName>
</protein>